<dbReference type="EMBL" id="AY257675">
    <property type="protein sequence ID" value="AAP22286.4"/>
    <property type="status" value="ALT_INIT"/>
    <property type="molecule type" value="mRNA"/>
</dbReference>
<dbReference type="EMBL" id="BC079030">
    <property type="protein sequence ID" value="AAH79030.1"/>
    <property type="status" value="ALT_INIT"/>
    <property type="molecule type" value="mRNA"/>
</dbReference>
<dbReference type="RefSeq" id="NP_872615.3">
    <property type="nucleotide sequence ID" value="NM_182674.3"/>
</dbReference>
<dbReference type="SMR" id="Q80WL2"/>
<dbReference type="FunCoup" id="Q80WL2">
    <property type="interactions" value="1749"/>
</dbReference>
<dbReference type="IntAct" id="Q80WL2">
    <property type="interactions" value="1"/>
</dbReference>
<dbReference type="MINT" id="Q80WL2"/>
<dbReference type="STRING" id="10116.ENSRNOP00000067656"/>
<dbReference type="iPTMnet" id="Q80WL2"/>
<dbReference type="PhosphoSitePlus" id="Q80WL2"/>
<dbReference type="jPOST" id="Q80WL2"/>
<dbReference type="PaxDb" id="10116-ENSRNOP00000067656"/>
<dbReference type="GeneID" id="359727"/>
<dbReference type="KEGG" id="rno:359727"/>
<dbReference type="AGR" id="RGD:727959"/>
<dbReference type="CTD" id="705"/>
<dbReference type="RGD" id="727959">
    <property type="gene designation" value="Bysl"/>
</dbReference>
<dbReference type="eggNOG" id="KOG3871">
    <property type="taxonomic scope" value="Eukaryota"/>
</dbReference>
<dbReference type="InParanoid" id="Q80WL2"/>
<dbReference type="OrthoDB" id="2192561at2759"/>
<dbReference type="PhylomeDB" id="Q80WL2"/>
<dbReference type="Reactome" id="R-RNO-6791226">
    <property type="pathway name" value="Major pathway of rRNA processing in the nucleolus and cytosol"/>
</dbReference>
<dbReference type="PRO" id="PR:Q80WL2"/>
<dbReference type="Proteomes" id="UP000002494">
    <property type="component" value="Unplaced"/>
</dbReference>
<dbReference type="GO" id="GO:0045177">
    <property type="term" value="C:apical part of cell"/>
    <property type="evidence" value="ECO:0000266"/>
    <property type="project" value="RGD"/>
</dbReference>
<dbReference type="GO" id="GO:0042995">
    <property type="term" value="C:cell projection"/>
    <property type="evidence" value="ECO:0000314"/>
    <property type="project" value="RGD"/>
</dbReference>
<dbReference type="GO" id="GO:0005737">
    <property type="term" value="C:cytoplasm"/>
    <property type="evidence" value="ECO:0000266"/>
    <property type="project" value="RGD"/>
</dbReference>
<dbReference type="GO" id="GO:0005881">
    <property type="term" value="C:cytoplasmic microtubule"/>
    <property type="evidence" value="ECO:0000314"/>
    <property type="project" value="RGD"/>
</dbReference>
<dbReference type="GO" id="GO:0005730">
    <property type="term" value="C:nucleolus"/>
    <property type="evidence" value="ECO:0000266"/>
    <property type="project" value="RGD"/>
</dbReference>
<dbReference type="GO" id="GO:0048471">
    <property type="term" value="C:perinuclear region of cytoplasm"/>
    <property type="evidence" value="ECO:0000314"/>
    <property type="project" value="RGD"/>
</dbReference>
<dbReference type="GO" id="GO:0030688">
    <property type="term" value="C:preribosome, small subunit precursor"/>
    <property type="evidence" value="ECO:0000318"/>
    <property type="project" value="GO_Central"/>
</dbReference>
<dbReference type="GO" id="GO:0030515">
    <property type="term" value="F:snoRNA binding"/>
    <property type="evidence" value="ECO:0000318"/>
    <property type="project" value="GO_Central"/>
</dbReference>
<dbReference type="GO" id="GO:0001825">
    <property type="term" value="P:blastocyst formation"/>
    <property type="evidence" value="ECO:0000266"/>
    <property type="project" value="RGD"/>
</dbReference>
<dbReference type="GO" id="GO:1904322">
    <property type="term" value="P:cellular response to forskolin"/>
    <property type="evidence" value="ECO:0000270"/>
    <property type="project" value="RGD"/>
</dbReference>
<dbReference type="GO" id="GO:0071363">
    <property type="term" value="P:cellular response to growth factor stimulus"/>
    <property type="evidence" value="ECO:0000270"/>
    <property type="project" value="RGD"/>
</dbReference>
<dbReference type="GO" id="GO:0071347">
    <property type="term" value="P:cellular response to interleukin-1"/>
    <property type="evidence" value="ECO:0000270"/>
    <property type="project" value="RGD"/>
</dbReference>
<dbReference type="GO" id="GO:0071222">
    <property type="term" value="P:cellular response to lipopolysaccharide"/>
    <property type="evidence" value="ECO:0000270"/>
    <property type="project" value="RGD"/>
</dbReference>
<dbReference type="GO" id="GO:0001701">
    <property type="term" value="P:in utero embryonic development"/>
    <property type="evidence" value="ECO:0000266"/>
    <property type="project" value="RGD"/>
</dbReference>
<dbReference type="GO" id="GO:0000462">
    <property type="term" value="P:maturation of SSU-rRNA from tricistronic rRNA transcript (SSU-rRNA, 5.8S rRNA, LSU-rRNA)"/>
    <property type="evidence" value="ECO:0000266"/>
    <property type="project" value="RGD"/>
</dbReference>
<dbReference type="GO" id="GO:0006364">
    <property type="term" value="P:rRNA processing"/>
    <property type="evidence" value="ECO:0000318"/>
    <property type="project" value="GO_Central"/>
</dbReference>
<dbReference type="GO" id="GO:0072089">
    <property type="term" value="P:stem cell proliferation"/>
    <property type="evidence" value="ECO:0000266"/>
    <property type="project" value="RGD"/>
</dbReference>
<dbReference type="GO" id="GO:0001829">
    <property type="term" value="P:trophectodermal cell differentiation"/>
    <property type="evidence" value="ECO:0000266"/>
    <property type="project" value="RGD"/>
</dbReference>
<dbReference type="InterPro" id="IPR007955">
    <property type="entry name" value="Bystin"/>
</dbReference>
<dbReference type="PANTHER" id="PTHR12821">
    <property type="entry name" value="BYSTIN"/>
    <property type="match status" value="1"/>
</dbReference>
<dbReference type="PANTHER" id="PTHR12821:SF0">
    <property type="entry name" value="BYSTIN"/>
    <property type="match status" value="1"/>
</dbReference>
<dbReference type="Pfam" id="PF05291">
    <property type="entry name" value="Bystin"/>
    <property type="match status" value="1"/>
</dbReference>
<reference evidence="7" key="1">
    <citation type="submission" date="2003-09" db="EMBL/GenBank/DDBJ databases">
        <title>Identification of rat bystin gene.</title>
        <authorList>
            <person name="Yang S."/>
            <person name="Li Z."/>
            <person name="Xu L."/>
            <person name="Zhou J."/>
        </authorList>
    </citation>
    <scope>NUCLEOTIDE SEQUENCE [MRNA]</scope>
    <source>
        <strain evidence="7">Sprague-Dawley</strain>
    </source>
</reference>
<reference evidence="6" key="2">
    <citation type="journal article" date="2004" name="Genome Res.">
        <title>The status, quality, and expansion of the NIH full-length cDNA project: the Mammalian Gene Collection (MGC).</title>
        <authorList>
            <consortium name="The MGC Project Team"/>
        </authorList>
    </citation>
    <scope>NUCLEOTIDE SEQUENCE [LARGE SCALE MRNA]</scope>
    <source>
        <tissue evidence="6">Testis</tissue>
    </source>
</reference>
<reference key="3">
    <citation type="journal article" date="2012" name="Nat. Commun.">
        <title>Quantitative maps of protein phosphorylation sites across 14 different rat organs and tissues.</title>
        <authorList>
            <person name="Lundby A."/>
            <person name="Secher A."/>
            <person name="Lage K."/>
            <person name="Nordsborg N.B."/>
            <person name="Dmytriyev A."/>
            <person name="Lundby C."/>
            <person name="Olsen J.V."/>
        </authorList>
    </citation>
    <scope>PHOSPHORYLATION [LARGE SCALE ANALYSIS] AT SER-97</scope>
    <scope>IDENTIFICATION BY MASS SPECTROMETRY [LARGE SCALE ANALYSIS]</scope>
</reference>
<organism>
    <name type="scientific">Rattus norvegicus</name>
    <name type="common">Rat</name>
    <dbReference type="NCBI Taxonomy" id="10116"/>
    <lineage>
        <taxon>Eukaryota</taxon>
        <taxon>Metazoa</taxon>
        <taxon>Chordata</taxon>
        <taxon>Craniata</taxon>
        <taxon>Vertebrata</taxon>
        <taxon>Euteleostomi</taxon>
        <taxon>Mammalia</taxon>
        <taxon>Eutheria</taxon>
        <taxon>Euarchontoglires</taxon>
        <taxon>Glires</taxon>
        <taxon>Rodentia</taxon>
        <taxon>Myomorpha</taxon>
        <taxon>Muroidea</taxon>
        <taxon>Muridae</taxon>
        <taxon>Murinae</taxon>
        <taxon>Rattus</taxon>
    </lineage>
</organism>
<evidence type="ECO:0000250" key="1">
    <source>
        <dbReference type="UniProtKB" id="O54825"/>
    </source>
</evidence>
<evidence type="ECO:0000250" key="2">
    <source>
        <dbReference type="UniProtKB" id="Q13895"/>
    </source>
</evidence>
<evidence type="ECO:0000255" key="3"/>
<evidence type="ECO:0000256" key="4">
    <source>
        <dbReference type="SAM" id="MobiDB-lite"/>
    </source>
</evidence>
<evidence type="ECO:0000305" key="5"/>
<evidence type="ECO:0000312" key="6">
    <source>
        <dbReference type="EMBL" id="AAH79030.1"/>
    </source>
</evidence>
<evidence type="ECO:0000312" key="7">
    <source>
        <dbReference type="EMBL" id="AAP22286.4"/>
    </source>
</evidence>
<evidence type="ECO:0000312" key="8">
    <source>
        <dbReference type="RGD" id="727959"/>
    </source>
</evidence>
<evidence type="ECO:0007744" key="9">
    <source>
    </source>
</evidence>
<sequence length="436" mass="50012">MPKLKVTRGARNQERHAPLAEQILAGDAVRAGTREKRRRHGVEEEEEYVGPRLSRRILQQARQQQEELETEHATGDRPAKPRERATRLGPGVPQDGSDEEDEEWPTLEKAAKMTVVNHQAEVVVDPEDERAIEMFMNKNPPVRRTLADIIMEKLTEKQTEVETVMSEVSGFPMPQLDPRVLEVYRGVREVLCKYRSGILPKAFKIIPALSNWEQILYVTEPEAWTAAAMYQATRIFASNLKERMAQRFYNLVLLPRVRDDIAEYKRLNFHLYMALKKALFKPGAWFKGILIPLCESGTCTLREAIIVGSIISKCSIPVLHSSAAMLKIAEMEYSGASSIFLRLLLDKKYALPYRVLDALVFHFLAFRTEKRQLPVLWHQCLLTLAQRYKADLATEQKEALLELLRLQPHPQLSPEIRRELQSAVPRDVEDVVVTME</sequence>
<comment type="function">
    <text evidence="1">Required for processing of 20S pre-rRNA precursor and biogenesis of 40S ribosomal subunits.</text>
</comment>
<comment type="subunit">
    <text evidence="2">Binds trophinin, tastin and cytokeratins.</text>
</comment>
<comment type="subcellular location">
    <subcellularLocation>
        <location evidence="2">Cytoplasm</location>
    </subcellularLocation>
    <subcellularLocation>
        <location evidence="2">Nucleus</location>
        <location evidence="2">Nucleolus</location>
    </subcellularLocation>
    <text evidence="2">Associated with 40S ribosomal subunits.</text>
</comment>
<comment type="similarity">
    <text evidence="3">Belongs to the bystin family.</text>
</comment>
<comment type="sequence caution" evidence="5">
    <conflict type="erroneous initiation">
        <sequence resource="EMBL-CDS" id="AAH79030"/>
    </conflict>
</comment>
<comment type="sequence caution" evidence="5">
    <conflict type="erroneous initiation">
        <sequence resource="EMBL-CDS" id="AAP22286"/>
    </conflict>
</comment>
<keyword id="KW-0963">Cytoplasm</keyword>
<keyword id="KW-0539">Nucleus</keyword>
<keyword id="KW-0597">Phosphoprotein</keyword>
<keyword id="KW-1185">Reference proteome</keyword>
<keyword id="KW-0690">Ribosome biogenesis</keyword>
<proteinExistence type="evidence at protein level"/>
<name>BYST_RAT</name>
<accession>Q80WL2</accession>
<accession>Q6AYI7</accession>
<feature type="chain" id="PRO_0000294934" description="Bystin">
    <location>
        <begin position="1"/>
        <end position="436"/>
    </location>
</feature>
<feature type="region of interest" description="Disordered" evidence="4">
    <location>
        <begin position="1"/>
        <end position="105"/>
    </location>
</feature>
<feature type="compositionally biased region" description="Basic and acidic residues" evidence="4">
    <location>
        <begin position="70"/>
        <end position="86"/>
    </location>
</feature>
<feature type="compositionally biased region" description="Acidic residues" evidence="4">
    <location>
        <begin position="96"/>
        <end position="105"/>
    </location>
</feature>
<feature type="modified residue" description="Phosphoserine" evidence="2">
    <location>
        <position position="54"/>
    </location>
</feature>
<feature type="modified residue" description="Phosphoserine" evidence="9">
    <location>
        <position position="97"/>
    </location>
</feature>
<feature type="modified residue" description="Phosphothreonine" evidence="2">
    <location>
        <position position="155"/>
    </location>
</feature>
<feature type="modified residue" description="Phosphoserine" evidence="2">
    <location>
        <position position="166"/>
    </location>
</feature>
<feature type="modified residue" description="Phosphoserine" evidence="2">
    <location>
        <position position="413"/>
    </location>
</feature>
<feature type="sequence conflict" description="In Ref. 2; AAH79030." evidence="5" ref="2">
    <location>
        <position position="112"/>
    </location>
</feature>
<feature type="sequence conflict" description="In Ref. 2; AAH79030." evidence="5" ref="2">
    <original>I</original>
    <variation>K</variation>
    <location>
        <position position="198"/>
    </location>
</feature>
<protein>
    <recommendedName>
        <fullName>Bystin</fullName>
    </recommendedName>
</protein>
<gene>
    <name evidence="6 8" type="primary">Bysl</name>
</gene>